<organism>
    <name type="scientific">Oryza sativa subsp. japonica</name>
    <name type="common">Rice</name>
    <dbReference type="NCBI Taxonomy" id="39947"/>
    <lineage>
        <taxon>Eukaryota</taxon>
        <taxon>Viridiplantae</taxon>
        <taxon>Streptophyta</taxon>
        <taxon>Embryophyta</taxon>
        <taxon>Tracheophyta</taxon>
        <taxon>Spermatophyta</taxon>
        <taxon>Magnoliopsida</taxon>
        <taxon>Liliopsida</taxon>
        <taxon>Poales</taxon>
        <taxon>Poaceae</taxon>
        <taxon>BOP clade</taxon>
        <taxon>Oryzoideae</taxon>
        <taxon>Oryzeae</taxon>
        <taxon>Oryzinae</taxon>
        <taxon>Oryza</taxon>
        <taxon>Oryza sativa</taxon>
    </lineage>
</organism>
<sequence>MASHANASGGGGDEEMVEASTLRHRHGAGKDANGVGTERQLAAAAAEGEEEGPSSVERAFVDRAVPSWREQLTVRAFVVSFFLSIMFSIIVMKLNLTTGIIPSLNVSAGLLGFFFVRLWTAAIERVGLLRQPFTRQENTVIQTCVVAAYGIAFSGGFGTYLFGMSETIAKQATEANNAQNVKNPHIGWMIGFLFLVSFIGLLALVPLRKIMIVDYKLTYPSGTATAYLINGFHTPEGAKLAKKQVKELGKFFLFSFVWGFFQWFYTAGDGCGFQSFPTLGLQAYKNRFYFDFSPTYVGVGMICPHIVNVSVLLGGILSWGIMWPLIRNKKGSWYAASLSETSLHGLQGYRVFISIALILGDGLYNFVKVLIRTTAGFVVMMKKNSTLPVSNNGSPMVATEAISFDDERRTELFLKDQIPKTVAFGGYVAVAAVSIGTLPQIFPQLKWYYILVAYVFAPVLAFCNAYGAGLTDWSLASTYGKLAIFIFGAWAGASNGGVLVGLAACGVMMSIVSTASDLMQDFKTGYLTLASPRSMFVSQVIGTAMGCVIAPCVFWLFYKAFADIGVSGTEYPAPYAIVYRNMAILGVDGFSSLPKHCLTLCYIFFAAAIAINLARDLAPSKVARFIPLPMAMAIPFYIGSYFAIDMFIGTVILFVWEMVNKAKAEAFAPAVASGLICGDGIWTLPQSILALAKVKPPICMKFLSRSVNAQVDGFLGN</sequence>
<feature type="chain" id="PRO_0000363875" description="Probable metal-nicotianamine transporter YSL12">
    <location>
        <begin position="1"/>
        <end position="717"/>
    </location>
</feature>
<feature type="transmembrane region" description="Helical" evidence="2">
    <location>
        <begin position="76"/>
        <end position="96"/>
    </location>
</feature>
<feature type="transmembrane region" description="Helical" evidence="2">
    <location>
        <begin position="99"/>
        <end position="119"/>
    </location>
</feature>
<feature type="transmembrane region" description="Helical" evidence="2">
    <location>
        <begin position="144"/>
        <end position="164"/>
    </location>
</feature>
<feature type="transmembrane region" description="Helical" evidence="2">
    <location>
        <begin position="186"/>
        <end position="206"/>
    </location>
</feature>
<feature type="transmembrane region" description="Helical" evidence="2">
    <location>
        <begin position="248"/>
        <end position="268"/>
    </location>
</feature>
<feature type="transmembrane region" description="Helical" evidence="2">
    <location>
        <begin position="306"/>
        <end position="326"/>
    </location>
</feature>
<feature type="transmembrane region" description="Helical" evidence="2">
    <location>
        <begin position="351"/>
        <end position="371"/>
    </location>
</feature>
<feature type="transmembrane region" description="Helical" evidence="2">
    <location>
        <begin position="422"/>
        <end position="442"/>
    </location>
</feature>
<feature type="transmembrane region" description="Helical" evidence="2">
    <location>
        <begin position="450"/>
        <end position="470"/>
    </location>
</feature>
<feature type="transmembrane region" description="Helical" evidence="2">
    <location>
        <begin position="482"/>
        <end position="502"/>
    </location>
</feature>
<feature type="transmembrane region" description="Helical" evidence="2">
    <location>
        <begin position="536"/>
        <end position="556"/>
    </location>
</feature>
<feature type="transmembrane region" description="Helical" evidence="2">
    <location>
        <begin position="593"/>
        <end position="613"/>
    </location>
</feature>
<feature type="transmembrane region" description="Helical" evidence="2">
    <location>
        <begin position="636"/>
        <end position="656"/>
    </location>
</feature>
<feature type="transmembrane region" description="Helical" evidence="2">
    <location>
        <begin position="671"/>
        <end position="691"/>
    </location>
</feature>
<feature type="region of interest" description="Disordered" evidence="3">
    <location>
        <begin position="1"/>
        <end position="56"/>
    </location>
</feature>
<feature type="splice variant" id="VSP_036329" description="In isoform 2." evidence="5">
    <location>
        <begin position="8"/>
        <end position="148"/>
    </location>
</feature>
<feature type="sequence conflict" description="In Ref. 6; AK069437." evidence="6" ref="6">
    <original>F</original>
    <variation>L</variation>
    <location>
        <position position="251"/>
    </location>
</feature>
<feature type="sequence conflict" description="In Ref. 1; BAE91892." evidence="6" ref="1">
    <original>D</original>
    <variation>N</variation>
    <location>
        <position position="361"/>
    </location>
</feature>
<feature type="sequence conflict" description="In Ref. 1; BAE91892." evidence="6" ref="1">
    <original>T</original>
    <variation>K</variation>
    <location>
        <position position="373"/>
    </location>
</feature>
<comment type="function">
    <text evidence="1">May be involved in the transport of nicotianamine-chelated metals.</text>
</comment>
<comment type="subcellular location">
    <subcellularLocation>
        <location evidence="6">Membrane</location>
        <topology evidence="6">Multi-pass membrane protein</topology>
    </subcellularLocation>
</comment>
<comment type="alternative products">
    <event type="alternative splicing"/>
    <isoform>
        <id>Q5JQD7-1</id>
        <name>1</name>
        <sequence type="displayed"/>
    </isoform>
    <isoform>
        <id>Q5JQD7-2</id>
        <name>2</name>
        <sequence type="described" ref="VSP_036329"/>
    </isoform>
</comment>
<comment type="tissue specificity">
    <text evidence="4">Expressed in root cortex and stele.</text>
</comment>
<comment type="similarity">
    <text evidence="6">Belongs to the YSL (TC 2.A.67.2) family.</text>
</comment>
<comment type="sequence caution" evidence="6">
    <conflict type="frameshift">
        <sequence resource="EMBL-CDS" id="BAE91892"/>
    </conflict>
</comment>
<comment type="sequence caution" evidence="6">
    <conflict type="erroneous gene model prediction">
        <sequence resource="EMBL-CDS" id="CAI44637"/>
    </conflict>
</comment>
<dbReference type="EMBL" id="AB190922">
    <property type="protein sequence ID" value="BAE91892.1"/>
    <property type="status" value="ALT_FRAME"/>
    <property type="molecule type" value="mRNA"/>
</dbReference>
<dbReference type="EMBL" id="AL663010">
    <property type="protein sequence ID" value="CAI44637.1"/>
    <property type="status" value="ALT_SEQ"/>
    <property type="molecule type" value="Genomic_DNA"/>
</dbReference>
<dbReference type="EMBL" id="AP008210">
    <property type="protein sequence ID" value="BAF15265.1"/>
    <property type="molecule type" value="Genomic_DNA"/>
</dbReference>
<dbReference type="EMBL" id="AP014960">
    <property type="protein sequence ID" value="BAS90151.1"/>
    <property type="molecule type" value="Genomic_DNA"/>
</dbReference>
<dbReference type="EMBL" id="AK069437">
    <property type="status" value="NOT_ANNOTATED_CDS"/>
    <property type="molecule type" value="mRNA"/>
</dbReference>
<dbReference type="RefSeq" id="XP_015635779.1">
    <property type="nucleotide sequence ID" value="XM_015780293.1"/>
</dbReference>
<dbReference type="SMR" id="Q5JQD7"/>
<dbReference type="FunCoup" id="Q5JQD7">
    <property type="interactions" value="128"/>
</dbReference>
<dbReference type="STRING" id="39947.Q5JQD7"/>
<dbReference type="PaxDb" id="39947-Q5JQD7"/>
<dbReference type="KEGG" id="dosa:Os04g0524600"/>
<dbReference type="eggNOG" id="ENOG502QQ2H">
    <property type="taxonomic scope" value="Eukaryota"/>
</dbReference>
<dbReference type="InParanoid" id="Q5JQD7"/>
<dbReference type="OMA" id="PFGIVYR"/>
<dbReference type="OrthoDB" id="627262at2759"/>
<dbReference type="Proteomes" id="UP000000763">
    <property type="component" value="Chromosome 4"/>
</dbReference>
<dbReference type="Proteomes" id="UP000059680">
    <property type="component" value="Chromosome 4"/>
</dbReference>
<dbReference type="GO" id="GO:0016020">
    <property type="term" value="C:membrane"/>
    <property type="evidence" value="ECO:0000318"/>
    <property type="project" value="GO_Central"/>
</dbReference>
<dbReference type="GO" id="GO:0035673">
    <property type="term" value="F:oligopeptide transmembrane transporter activity"/>
    <property type="evidence" value="ECO:0007669"/>
    <property type="project" value="InterPro"/>
</dbReference>
<dbReference type="InterPro" id="IPR004813">
    <property type="entry name" value="OPT"/>
</dbReference>
<dbReference type="InterPro" id="IPR045035">
    <property type="entry name" value="YSL-like"/>
</dbReference>
<dbReference type="NCBIfam" id="TIGR00728">
    <property type="entry name" value="OPT_sfam"/>
    <property type="match status" value="1"/>
</dbReference>
<dbReference type="PANTHER" id="PTHR31645:SF76">
    <property type="entry name" value="METAL-NICOTIANAMINE TRANSPORTER YSL8-RELATED"/>
    <property type="match status" value="1"/>
</dbReference>
<dbReference type="PANTHER" id="PTHR31645">
    <property type="entry name" value="OLIGOPEPTIDE TRANSPORTER YGL114W-RELATED"/>
    <property type="match status" value="1"/>
</dbReference>
<dbReference type="Pfam" id="PF03169">
    <property type="entry name" value="OPT"/>
    <property type="match status" value="1"/>
</dbReference>
<protein>
    <recommendedName>
        <fullName>Probable metal-nicotianamine transporter YSL12</fullName>
    </recommendedName>
    <alternativeName>
        <fullName>Protein YELLOW STRIPE LIKE 12</fullName>
        <shortName>OsYSL12</shortName>
    </alternativeName>
</protein>
<accession>Q5JQD7</accession>
<accession>Q0JBM2</accession>
<accession>Q25CH4</accession>
<keyword id="KW-0025">Alternative splicing</keyword>
<keyword id="KW-0472">Membrane</keyword>
<keyword id="KW-1185">Reference proteome</keyword>
<keyword id="KW-0812">Transmembrane</keyword>
<keyword id="KW-1133">Transmembrane helix</keyword>
<keyword id="KW-0813">Transport</keyword>
<gene>
    <name type="primary">YSL12</name>
    <name type="ordered locus">Os04g0524600</name>
    <name type="ordered locus">LOC_Os04g44320</name>
    <name type="ORF">OSJNBb0065J09.17</name>
</gene>
<proteinExistence type="evidence at transcript level"/>
<reference key="1">
    <citation type="journal article" date="2004" name="Plant J.">
        <title>OsYSL2 is a rice metal-nicotianamine transporter that is regulated by iron and expressed in the phloem.</title>
        <authorList>
            <person name="Koike S."/>
            <person name="Inoue H."/>
            <person name="Mizuno D."/>
            <person name="Takahashi M."/>
            <person name="Nakanishi H."/>
            <person name="Mori S."/>
            <person name="Nishizawa N.K."/>
        </authorList>
    </citation>
    <scope>NUCLEOTIDE SEQUENCE [MRNA] (ISOFORM 1)</scope>
    <scope>GENE FAMILY</scope>
    <scope>NOMENCLATURE</scope>
    <source>
        <strain>cv. Nipponbare</strain>
    </source>
</reference>
<reference key="2">
    <citation type="journal article" date="2002" name="Nature">
        <title>Sequence and analysis of rice chromosome 4.</title>
        <authorList>
            <person name="Feng Q."/>
            <person name="Zhang Y."/>
            <person name="Hao P."/>
            <person name="Wang S."/>
            <person name="Fu G."/>
            <person name="Huang Y."/>
            <person name="Li Y."/>
            <person name="Zhu J."/>
            <person name="Liu Y."/>
            <person name="Hu X."/>
            <person name="Jia P."/>
            <person name="Zhang Y."/>
            <person name="Zhao Q."/>
            <person name="Ying K."/>
            <person name="Yu S."/>
            <person name="Tang Y."/>
            <person name="Weng Q."/>
            <person name="Zhang L."/>
            <person name="Lu Y."/>
            <person name="Mu J."/>
            <person name="Lu Y."/>
            <person name="Zhang L.S."/>
            <person name="Yu Z."/>
            <person name="Fan D."/>
            <person name="Liu X."/>
            <person name="Lu T."/>
            <person name="Li C."/>
            <person name="Wu Y."/>
            <person name="Sun T."/>
            <person name="Lei H."/>
            <person name="Li T."/>
            <person name="Hu H."/>
            <person name="Guan J."/>
            <person name="Wu M."/>
            <person name="Zhang R."/>
            <person name="Zhou B."/>
            <person name="Chen Z."/>
            <person name="Chen L."/>
            <person name="Jin Z."/>
            <person name="Wang R."/>
            <person name="Yin H."/>
            <person name="Cai Z."/>
            <person name="Ren S."/>
            <person name="Lv G."/>
            <person name="Gu W."/>
            <person name="Zhu G."/>
            <person name="Tu Y."/>
            <person name="Jia J."/>
            <person name="Zhang Y."/>
            <person name="Chen J."/>
            <person name="Kang H."/>
            <person name="Chen X."/>
            <person name="Shao C."/>
            <person name="Sun Y."/>
            <person name="Hu Q."/>
            <person name="Zhang X."/>
            <person name="Zhang W."/>
            <person name="Wang L."/>
            <person name="Ding C."/>
            <person name="Sheng H."/>
            <person name="Gu J."/>
            <person name="Chen S."/>
            <person name="Ni L."/>
            <person name="Zhu F."/>
            <person name="Chen W."/>
            <person name="Lan L."/>
            <person name="Lai Y."/>
            <person name="Cheng Z."/>
            <person name="Gu M."/>
            <person name="Jiang J."/>
            <person name="Li J."/>
            <person name="Hong G."/>
            <person name="Xue Y."/>
            <person name="Han B."/>
        </authorList>
    </citation>
    <scope>NUCLEOTIDE SEQUENCE [LARGE SCALE GENOMIC DNA]</scope>
    <source>
        <strain>cv. Nipponbare</strain>
    </source>
</reference>
<reference key="3">
    <citation type="journal article" date="2005" name="Nature">
        <title>The map-based sequence of the rice genome.</title>
        <authorList>
            <consortium name="International rice genome sequencing project (IRGSP)"/>
        </authorList>
    </citation>
    <scope>NUCLEOTIDE SEQUENCE [LARGE SCALE GENOMIC DNA]</scope>
    <source>
        <strain>cv. Nipponbare</strain>
    </source>
</reference>
<reference key="4">
    <citation type="journal article" date="2008" name="Nucleic Acids Res.">
        <title>The rice annotation project database (RAP-DB): 2008 update.</title>
        <authorList>
            <consortium name="The rice annotation project (RAP)"/>
        </authorList>
    </citation>
    <scope>GENOME REANNOTATION</scope>
    <source>
        <strain>cv. Nipponbare</strain>
    </source>
</reference>
<reference key="5">
    <citation type="journal article" date="2013" name="Rice">
        <title>Improvement of the Oryza sativa Nipponbare reference genome using next generation sequence and optical map data.</title>
        <authorList>
            <person name="Kawahara Y."/>
            <person name="de la Bastide M."/>
            <person name="Hamilton J.P."/>
            <person name="Kanamori H."/>
            <person name="McCombie W.R."/>
            <person name="Ouyang S."/>
            <person name="Schwartz D.C."/>
            <person name="Tanaka T."/>
            <person name="Wu J."/>
            <person name="Zhou S."/>
            <person name="Childs K.L."/>
            <person name="Davidson R.M."/>
            <person name="Lin H."/>
            <person name="Quesada-Ocampo L."/>
            <person name="Vaillancourt B."/>
            <person name="Sakai H."/>
            <person name="Lee S.S."/>
            <person name="Kim J."/>
            <person name="Numa H."/>
            <person name="Itoh T."/>
            <person name="Buell C.R."/>
            <person name="Matsumoto T."/>
        </authorList>
    </citation>
    <scope>GENOME REANNOTATION</scope>
    <source>
        <strain>cv. Nipponbare</strain>
    </source>
</reference>
<reference key="6">
    <citation type="journal article" date="2003" name="Science">
        <title>Collection, mapping, and annotation of over 28,000 cDNA clones from japonica rice.</title>
        <authorList>
            <consortium name="The rice full-length cDNA consortium"/>
        </authorList>
    </citation>
    <scope>NUCLEOTIDE SEQUENCE [LARGE SCALE MRNA] (ISOFORM 2)</scope>
    <source>
        <strain>cv. Nipponbare</strain>
    </source>
</reference>
<reference key="7">
    <citation type="journal article" date="2009" name="J. Biol. Chem.">
        <title>Rice OsYSL15 is an iron-regulated iron(III)-deoxymugineic acid Transporter expressed in the roots and is essential for iron uptake in early growth of the seedlings.</title>
        <authorList>
            <person name="Inoue H."/>
            <person name="Kobayashi T."/>
            <person name="Nozoye T."/>
            <person name="Takahashi M."/>
            <person name="Kakei Y."/>
            <person name="Suzuki K."/>
            <person name="Nakazono M."/>
            <person name="Nakanishi H."/>
            <person name="Mori S."/>
            <person name="Nishizawa N.K."/>
        </authorList>
    </citation>
    <scope>TISSUE SPECIFICITY</scope>
</reference>
<name>YSL12_ORYSJ</name>
<evidence type="ECO:0000250" key="1"/>
<evidence type="ECO:0000255" key="2"/>
<evidence type="ECO:0000256" key="3">
    <source>
        <dbReference type="SAM" id="MobiDB-lite"/>
    </source>
</evidence>
<evidence type="ECO:0000269" key="4">
    <source>
    </source>
</evidence>
<evidence type="ECO:0000303" key="5">
    <source>
    </source>
</evidence>
<evidence type="ECO:0000305" key="6"/>